<accession>P80925</accession>
<protein>
    <recommendedName>
        <fullName>Bacteriocin mundticin</fullName>
    </recommendedName>
</protein>
<keyword id="KW-0044">Antibiotic</keyword>
<keyword id="KW-0929">Antimicrobial</keyword>
<keyword id="KW-0078">Bacteriocin</keyword>
<keyword id="KW-0903">Direct protein sequencing</keyword>
<keyword id="KW-1015">Disulfide bond</keyword>
<dbReference type="SMR" id="P80925"/>
<dbReference type="GO" id="GO:0005576">
    <property type="term" value="C:extracellular region"/>
    <property type="evidence" value="ECO:0007669"/>
    <property type="project" value="InterPro"/>
</dbReference>
<dbReference type="GO" id="GO:0042742">
    <property type="term" value="P:defense response to bacterium"/>
    <property type="evidence" value="ECO:0007669"/>
    <property type="project" value="UniProtKB-KW"/>
</dbReference>
<dbReference type="GO" id="GO:0031640">
    <property type="term" value="P:killing of cells of another organism"/>
    <property type="evidence" value="ECO:0007669"/>
    <property type="project" value="UniProtKB-KW"/>
</dbReference>
<dbReference type="Gene3D" id="1.20.5.130">
    <property type="match status" value="1"/>
</dbReference>
<dbReference type="InterPro" id="IPR002633">
    <property type="entry name" value="Bacteriocin_IIa"/>
</dbReference>
<dbReference type="InterPro" id="IPR023384">
    <property type="entry name" value="Bacteriocin_IIa_CS"/>
</dbReference>
<dbReference type="InterPro" id="IPR023388">
    <property type="entry name" value="Bacteriocin_IIa_dom_sf"/>
</dbReference>
<dbReference type="Pfam" id="PF01721">
    <property type="entry name" value="Bacteriocin_II"/>
    <property type="match status" value="1"/>
</dbReference>
<dbReference type="PROSITE" id="PS60030">
    <property type="entry name" value="BACTERIOCIN_IIA"/>
    <property type="match status" value="1"/>
</dbReference>
<sequence length="43" mass="4290">KYYGNGVSCNKKGCSVDWGKAIGIIGNNSAANLATGGAAGWSK</sequence>
<proteinExistence type="evidence at protein level"/>
<feature type="peptide" id="PRO_0000110572" description="Bacteriocin mundticin">
    <location>
        <begin position="1"/>
        <end position="43"/>
    </location>
</feature>
<feature type="disulfide bond" evidence="1">
    <location>
        <begin position="9"/>
        <end position="14"/>
    </location>
</feature>
<evidence type="ECO:0000250" key="1"/>
<evidence type="ECO:0000269" key="2">
    <source>
    </source>
</evidence>
<evidence type="ECO:0000305" key="3"/>
<name>MUTI_ENTMU</name>
<organism>
    <name type="scientific">Enterococcus mundtii</name>
    <dbReference type="NCBI Taxonomy" id="53346"/>
    <lineage>
        <taxon>Bacteria</taxon>
        <taxon>Bacillati</taxon>
        <taxon>Bacillota</taxon>
        <taxon>Bacilli</taxon>
        <taxon>Lactobacillales</taxon>
        <taxon>Enterococcaceae</taxon>
        <taxon>Enterococcus</taxon>
    </lineage>
</organism>
<reference key="1">
    <citation type="journal article" date="1998" name="Biochim. Biophys. Acta">
        <title>A novel bacteriocin with a YGNGV motif from vegetable-associated Enterococcus mundtii: full characterization and interaction with target organisms.</title>
        <authorList>
            <person name="Bennik M.H.J."/>
            <person name="Vanloo B."/>
            <person name="Brasseur R."/>
            <person name="Gorris L.G.M."/>
            <person name="Smid E.J."/>
        </authorList>
    </citation>
    <scope>PROTEIN SEQUENCE</scope>
    <scope>MASS SPECTROMETRY</scope>
    <source>
        <strain>ATO6</strain>
    </source>
</reference>
<comment type="function">
    <text>This bacteriocin inhibits the growth of several Gram-positive bacteria, especially pathogenic L.monocytogenes and C.botulinum but has no effect on the growth of a number of yeasts and Gram-negative bacteria.</text>
</comment>
<comment type="biophysicochemical properties">
    <phDependence>
        <text>Stable from pH 1 to 10.</text>
    </phDependence>
    <temperatureDependence>
        <text>Thermostable. Retains 100% of its maximal activity after heating at 100 degrees Celsius for 15 minutes, but only 50% of activity after heating 1 hour at this same temperature.</text>
    </temperatureDependence>
</comment>
<comment type="mass spectrometry" mass="4287.21" error="0.59" method="Electrospray" evidence="2"/>
<comment type="similarity">
    <text evidence="3">Belongs to the bacteriocin class IIA/YGNGV family.</text>
</comment>